<proteinExistence type="inferred from homology"/>
<keyword id="KW-0067">ATP-binding</keyword>
<keyword id="KW-0173">Coenzyme A biosynthesis</keyword>
<keyword id="KW-0963">Cytoplasm</keyword>
<keyword id="KW-0418">Kinase</keyword>
<keyword id="KW-0479">Metal-binding</keyword>
<keyword id="KW-0547">Nucleotide-binding</keyword>
<keyword id="KW-0630">Potassium</keyword>
<keyword id="KW-0808">Transferase</keyword>
<dbReference type="EC" id="2.7.1.33" evidence="1"/>
<dbReference type="EMBL" id="CP001615">
    <property type="protein sequence ID" value="ACQ70601.1"/>
    <property type="molecule type" value="Genomic_DNA"/>
</dbReference>
<dbReference type="RefSeq" id="WP_012727719.1">
    <property type="nucleotide sequence ID" value="NC_012673.1"/>
</dbReference>
<dbReference type="SMR" id="C4KZT8"/>
<dbReference type="STRING" id="360911.EAT1b_1675"/>
<dbReference type="KEGG" id="eat:EAT1b_1675"/>
<dbReference type="eggNOG" id="COG1521">
    <property type="taxonomic scope" value="Bacteria"/>
</dbReference>
<dbReference type="HOGENOM" id="CLU_066627_1_0_9"/>
<dbReference type="OrthoDB" id="9804707at2"/>
<dbReference type="UniPathway" id="UPA00241">
    <property type="reaction ID" value="UER00352"/>
</dbReference>
<dbReference type="Proteomes" id="UP000000716">
    <property type="component" value="Chromosome"/>
</dbReference>
<dbReference type="GO" id="GO:0005737">
    <property type="term" value="C:cytoplasm"/>
    <property type="evidence" value="ECO:0007669"/>
    <property type="project" value="UniProtKB-SubCell"/>
</dbReference>
<dbReference type="GO" id="GO:0005524">
    <property type="term" value="F:ATP binding"/>
    <property type="evidence" value="ECO:0007669"/>
    <property type="project" value="UniProtKB-UniRule"/>
</dbReference>
<dbReference type="GO" id="GO:0046872">
    <property type="term" value="F:metal ion binding"/>
    <property type="evidence" value="ECO:0007669"/>
    <property type="project" value="UniProtKB-KW"/>
</dbReference>
<dbReference type="GO" id="GO:0004594">
    <property type="term" value="F:pantothenate kinase activity"/>
    <property type="evidence" value="ECO:0007669"/>
    <property type="project" value="UniProtKB-UniRule"/>
</dbReference>
<dbReference type="GO" id="GO:0015937">
    <property type="term" value="P:coenzyme A biosynthetic process"/>
    <property type="evidence" value="ECO:0007669"/>
    <property type="project" value="UniProtKB-UniRule"/>
</dbReference>
<dbReference type="CDD" id="cd24015">
    <property type="entry name" value="ASKHA_NBD_PanK-III"/>
    <property type="match status" value="1"/>
</dbReference>
<dbReference type="Gene3D" id="3.30.420.40">
    <property type="match status" value="2"/>
</dbReference>
<dbReference type="HAMAP" id="MF_01274">
    <property type="entry name" value="Pantothen_kinase_3"/>
    <property type="match status" value="1"/>
</dbReference>
<dbReference type="InterPro" id="IPR043129">
    <property type="entry name" value="ATPase_NBD"/>
</dbReference>
<dbReference type="InterPro" id="IPR004619">
    <property type="entry name" value="Type_III_PanK"/>
</dbReference>
<dbReference type="NCBIfam" id="TIGR00671">
    <property type="entry name" value="baf"/>
    <property type="match status" value="1"/>
</dbReference>
<dbReference type="NCBIfam" id="NF009843">
    <property type="entry name" value="PRK13318.1-1"/>
    <property type="match status" value="1"/>
</dbReference>
<dbReference type="NCBIfam" id="NF009844">
    <property type="entry name" value="PRK13318.1-2"/>
    <property type="match status" value="1"/>
</dbReference>
<dbReference type="NCBIfam" id="NF009847">
    <property type="entry name" value="PRK13318.1-5"/>
    <property type="match status" value="1"/>
</dbReference>
<dbReference type="NCBIfam" id="NF009848">
    <property type="entry name" value="PRK13318.1-6"/>
    <property type="match status" value="1"/>
</dbReference>
<dbReference type="NCBIfam" id="NF009855">
    <property type="entry name" value="PRK13321.1"/>
    <property type="match status" value="1"/>
</dbReference>
<dbReference type="PANTHER" id="PTHR34265">
    <property type="entry name" value="TYPE III PANTOTHENATE KINASE"/>
    <property type="match status" value="1"/>
</dbReference>
<dbReference type="PANTHER" id="PTHR34265:SF1">
    <property type="entry name" value="TYPE III PANTOTHENATE KINASE"/>
    <property type="match status" value="1"/>
</dbReference>
<dbReference type="Pfam" id="PF03309">
    <property type="entry name" value="Pan_kinase"/>
    <property type="match status" value="1"/>
</dbReference>
<dbReference type="SUPFAM" id="SSF53067">
    <property type="entry name" value="Actin-like ATPase domain"/>
    <property type="match status" value="2"/>
</dbReference>
<accession>C4KZT8</accession>
<organism>
    <name type="scientific">Exiguobacterium sp. (strain ATCC BAA-1283 / AT1b)</name>
    <dbReference type="NCBI Taxonomy" id="360911"/>
    <lineage>
        <taxon>Bacteria</taxon>
        <taxon>Bacillati</taxon>
        <taxon>Bacillota</taxon>
        <taxon>Bacilli</taxon>
        <taxon>Bacillales</taxon>
        <taxon>Bacillales Family XII. Incertae Sedis</taxon>
        <taxon>Exiguobacterium</taxon>
    </lineage>
</organism>
<name>COAX_EXISA</name>
<reference key="1">
    <citation type="journal article" date="2011" name="J. Bacteriol.">
        <title>Complete genome sequence of the Thermophilic Bacterium Exiguobacterium sp. AT1b.</title>
        <authorList>
            <person name="Vishnivetskaya T.A."/>
            <person name="Lucas S."/>
            <person name="Copeland A."/>
            <person name="Lapidus A."/>
            <person name="Glavina del Rio T."/>
            <person name="Dalin E."/>
            <person name="Tice H."/>
            <person name="Bruce D.C."/>
            <person name="Goodwin L.A."/>
            <person name="Pitluck S."/>
            <person name="Saunders E."/>
            <person name="Brettin T."/>
            <person name="Detter C."/>
            <person name="Han C."/>
            <person name="Larimer F."/>
            <person name="Land M.L."/>
            <person name="Hauser L.J."/>
            <person name="Kyrpides N.C."/>
            <person name="Ovchinnikova G."/>
            <person name="Kathariou S."/>
            <person name="Ramaley R.F."/>
            <person name="Rodrigues D.F."/>
            <person name="Hendrix C."/>
            <person name="Richardson P."/>
            <person name="Tiedje J.M."/>
        </authorList>
    </citation>
    <scope>NUCLEOTIDE SEQUENCE [LARGE SCALE GENOMIC DNA]</scope>
    <source>
        <strain>ATCC BAA-1283 / AT1b</strain>
    </source>
</reference>
<comment type="function">
    <text evidence="1">Catalyzes the phosphorylation of pantothenate (Pan), the first step in CoA biosynthesis.</text>
</comment>
<comment type="catalytic activity">
    <reaction evidence="1">
        <text>(R)-pantothenate + ATP = (R)-4'-phosphopantothenate + ADP + H(+)</text>
        <dbReference type="Rhea" id="RHEA:16373"/>
        <dbReference type="ChEBI" id="CHEBI:10986"/>
        <dbReference type="ChEBI" id="CHEBI:15378"/>
        <dbReference type="ChEBI" id="CHEBI:29032"/>
        <dbReference type="ChEBI" id="CHEBI:30616"/>
        <dbReference type="ChEBI" id="CHEBI:456216"/>
        <dbReference type="EC" id="2.7.1.33"/>
    </reaction>
</comment>
<comment type="cofactor">
    <cofactor evidence="1">
        <name>NH4(+)</name>
        <dbReference type="ChEBI" id="CHEBI:28938"/>
    </cofactor>
    <cofactor evidence="1">
        <name>K(+)</name>
        <dbReference type="ChEBI" id="CHEBI:29103"/>
    </cofactor>
    <text evidence="1">A monovalent cation. Ammonium or potassium.</text>
</comment>
<comment type="pathway">
    <text evidence="1">Cofactor biosynthesis; coenzyme A biosynthesis; CoA from (R)-pantothenate: step 1/5.</text>
</comment>
<comment type="subunit">
    <text evidence="1">Homodimer.</text>
</comment>
<comment type="subcellular location">
    <subcellularLocation>
        <location evidence="1">Cytoplasm</location>
    </subcellularLocation>
</comment>
<comment type="similarity">
    <text evidence="1">Belongs to the type III pantothenate kinase family.</text>
</comment>
<protein>
    <recommendedName>
        <fullName evidence="1">Type III pantothenate kinase</fullName>
        <ecNumber evidence="1">2.7.1.33</ecNumber>
    </recommendedName>
    <alternativeName>
        <fullName evidence="1">PanK-III</fullName>
    </alternativeName>
    <alternativeName>
        <fullName evidence="1">Pantothenic acid kinase</fullName>
    </alternativeName>
</protein>
<feature type="chain" id="PRO_1000214187" description="Type III pantothenate kinase">
    <location>
        <begin position="1"/>
        <end position="254"/>
    </location>
</feature>
<feature type="active site" description="Proton acceptor" evidence="1">
    <location>
        <position position="109"/>
    </location>
</feature>
<feature type="binding site" evidence="1">
    <location>
        <begin position="6"/>
        <end position="13"/>
    </location>
    <ligand>
        <name>ATP</name>
        <dbReference type="ChEBI" id="CHEBI:30616"/>
    </ligand>
</feature>
<feature type="binding site" evidence="1">
    <location>
        <begin position="107"/>
        <end position="110"/>
    </location>
    <ligand>
        <name>substrate</name>
    </ligand>
</feature>
<feature type="binding site" evidence="1">
    <location>
        <position position="129"/>
    </location>
    <ligand>
        <name>K(+)</name>
        <dbReference type="ChEBI" id="CHEBI:29103"/>
    </ligand>
</feature>
<feature type="binding site" evidence="1">
    <location>
        <position position="132"/>
    </location>
    <ligand>
        <name>ATP</name>
        <dbReference type="ChEBI" id="CHEBI:30616"/>
    </ligand>
</feature>
<feature type="binding site" evidence="1">
    <location>
        <position position="184"/>
    </location>
    <ligand>
        <name>substrate</name>
    </ligand>
</feature>
<evidence type="ECO:0000255" key="1">
    <source>
        <dbReference type="HAMAP-Rule" id="MF_01274"/>
    </source>
</evidence>
<sequence length="254" mass="28089">MILVIDVGNTNIVLGMYDGDNLVHHWRISTDRTKTTDEYGMLVKSLFDHSNVSFEQVEGVILSSVVPPVIFPLEQMSQRYFNVRPIVVGPGVKTGLDIHVENPREVGADRIVNAVAGIAKYDGPLIIVDFGTATTYCYIDEKRRYHGGIISPGIMISVEALYQRAAKLPRIELATPPTVIGKNTIQAMQSGTYYGYVAQVDGIVNRMKREVGEATVIATGGLARLISEHAETIDHVDSFLTLEGLRLIYERNQK</sequence>
<gene>
    <name evidence="1" type="primary">coaX</name>
    <name type="ordered locus">EAT1b_1675</name>
</gene>